<keyword id="KW-0150">Chloroplast</keyword>
<keyword id="KW-0472">Membrane</keyword>
<keyword id="KW-0602">Photosynthesis</keyword>
<keyword id="KW-0934">Plastid</keyword>
<keyword id="KW-0677">Repeat</keyword>
<keyword id="KW-0793">Thylakoid</keyword>
<keyword id="KW-0802">TPR repeat</keyword>
<accession>Q32RY5</accession>
<organism>
    <name type="scientific">Staurastrum punctulatum</name>
    <name type="common">Green alga</name>
    <name type="synonym">Cosmoastrum punctulatum</name>
    <dbReference type="NCBI Taxonomy" id="102822"/>
    <lineage>
        <taxon>Eukaryota</taxon>
        <taxon>Viridiplantae</taxon>
        <taxon>Streptophyta</taxon>
        <taxon>Zygnematophyceae</taxon>
        <taxon>Zygnematophycidae</taxon>
        <taxon>Desmidiales</taxon>
        <taxon>Desmidiaceae</taxon>
        <taxon>Staurastrum</taxon>
    </lineage>
</organism>
<evidence type="ECO:0000255" key="1">
    <source>
        <dbReference type="HAMAP-Rule" id="MF_00439"/>
    </source>
</evidence>
<feature type="chain" id="PRO_0000275640" description="Photosystem I assembly protein Ycf3">
    <location>
        <begin position="1"/>
        <end position="169"/>
    </location>
</feature>
<feature type="repeat" description="TPR 1">
    <location>
        <begin position="35"/>
        <end position="68"/>
    </location>
</feature>
<feature type="repeat" description="TPR 2">
    <location>
        <begin position="72"/>
        <end position="105"/>
    </location>
</feature>
<feature type="repeat" description="TPR 3">
    <location>
        <begin position="120"/>
        <end position="153"/>
    </location>
</feature>
<dbReference type="EMBL" id="AY958085">
    <property type="protein sequence ID" value="AAX45764.1"/>
    <property type="molecule type" value="Genomic_DNA"/>
</dbReference>
<dbReference type="RefSeq" id="YP_636391.1">
    <property type="nucleotide sequence ID" value="NC_008116.1"/>
</dbReference>
<dbReference type="SMR" id="Q32RY5"/>
<dbReference type="GeneID" id="4108637"/>
<dbReference type="GO" id="GO:0009535">
    <property type="term" value="C:chloroplast thylakoid membrane"/>
    <property type="evidence" value="ECO:0007669"/>
    <property type="project" value="UniProtKB-SubCell"/>
</dbReference>
<dbReference type="GO" id="GO:0015979">
    <property type="term" value="P:photosynthesis"/>
    <property type="evidence" value="ECO:0007669"/>
    <property type="project" value="UniProtKB-UniRule"/>
</dbReference>
<dbReference type="FunFam" id="1.25.40.10:FF:000004">
    <property type="entry name" value="Photosystem I assembly protein Ycf3"/>
    <property type="match status" value="1"/>
</dbReference>
<dbReference type="Gene3D" id="1.25.40.10">
    <property type="entry name" value="Tetratricopeptide repeat domain"/>
    <property type="match status" value="1"/>
</dbReference>
<dbReference type="HAMAP" id="MF_00439">
    <property type="entry name" value="Ycf3"/>
    <property type="match status" value="1"/>
</dbReference>
<dbReference type="InterPro" id="IPR022818">
    <property type="entry name" value="PSI_Ycf3_assembly"/>
</dbReference>
<dbReference type="InterPro" id="IPR011990">
    <property type="entry name" value="TPR-like_helical_dom_sf"/>
</dbReference>
<dbReference type="InterPro" id="IPR019734">
    <property type="entry name" value="TPR_rpt"/>
</dbReference>
<dbReference type="NCBIfam" id="NF002725">
    <property type="entry name" value="PRK02603.1"/>
    <property type="match status" value="1"/>
</dbReference>
<dbReference type="Pfam" id="PF00515">
    <property type="entry name" value="TPR_1"/>
    <property type="match status" value="1"/>
</dbReference>
<dbReference type="SMART" id="SM00028">
    <property type="entry name" value="TPR"/>
    <property type="match status" value="3"/>
</dbReference>
<dbReference type="SUPFAM" id="SSF48452">
    <property type="entry name" value="TPR-like"/>
    <property type="match status" value="1"/>
</dbReference>
<dbReference type="PROSITE" id="PS50005">
    <property type="entry name" value="TPR"/>
    <property type="match status" value="3"/>
</dbReference>
<dbReference type="PROSITE" id="PS50293">
    <property type="entry name" value="TPR_REGION"/>
    <property type="match status" value="1"/>
</dbReference>
<name>YCF3_STAPU</name>
<geneLocation type="chloroplast"/>
<gene>
    <name evidence="1" type="primary">ycf3</name>
</gene>
<comment type="function">
    <text evidence="1">Essential for the assembly of the photosystem I (PSI) complex. May act as a chaperone-like factor to guide the assembly of the PSI subunits.</text>
</comment>
<comment type="subcellular location">
    <subcellularLocation>
        <location evidence="1">Plastid</location>
        <location evidence="1">Chloroplast thylakoid membrane</location>
        <topology evidence="1">Peripheral membrane protein</topology>
    </subcellularLocation>
</comment>
<comment type="similarity">
    <text evidence="1">Belongs to the Ycf3 family.</text>
</comment>
<proteinExistence type="inferred from homology"/>
<protein>
    <recommendedName>
        <fullName evidence="1">Photosystem I assembly protein Ycf3</fullName>
    </recommendedName>
</protein>
<reference key="1">
    <citation type="journal article" date="2005" name="BMC Biol.">
        <title>The complete chloroplast DNA sequences of the charophycean green algae Staurastrum and Zygnema reveal that the chloroplast genome underwent extensive changes during the evolution of the Zygnematales.</title>
        <authorList>
            <person name="Turmel M."/>
            <person name="Otis C."/>
            <person name="Lemieux C."/>
        </authorList>
    </citation>
    <scope>NUCLEOTIDE SEQUENCE [LARGE SCALE GENOMIC DNA]</scope>
</reference>
<sequence>MPRSQRNDNFIDKTFTIVADILLRIIPTTQREKEAFTYYRDGMSAQSEGEYAEALLNYYEAMRLEIDPYDRSYILYNIGLIHTSNGEHVKALEYYFQALERNPSLPQALNNMAVICHYRGEQAIEQGDSENSEIWFDQAASYWKQAIALAPNNYIEAENWLKITGRLKE</sequence>